<dbReference type="EC" id="6.1.1.4" evidence="1"/>
<dbReference type="EMBL" id="AL590842">
    <property type="protein sequence ID" value="CAL21233.1"/>
    <property type="molecule type" value="Genomic_DNA"/>
</dbReference>
<dbReference type="EMBL" id="AE009952">
    <property type="protein sequence ID" value="AAM84761.1"/>
    <property type="molecule type" value="Genomic_DNA"/>
</dbReference>
<dbReference type="EMBL" id="AE017042">
    <property type="protein sequence ID" value="AAS61349.1"/>
    <property type="molecule type" value="Genomic_DNA"/>
</dbReference>
<dbReference type="PIR" id="AF0318">
    <property type="entry name" value="AF0318"/>
</dbReference>
<dbReference type="RefSeq" id="WP_002210333.1">
    <property type="nucleotide sequence ID" value="NZ_WUCM01000011.1"/>
</dbReference>
<dbReference type="RefSeq" id="YP_002347566.1">
    <property type="nucleotide sequence ID" value="NC_003143.1"/>
</dbReference>
<dbReference type="SMR" id="Q8ZDF8"/>
<dbReference type="IntAct" id="Q8ZDF8">
    <property type="interactions" value="3"/>
</dbReference>
<dbReference type="STRING" id="214092.YPO2610"/>
<dbReference type="PaxDb" id="214092-YPO2610"/>
<dbReference type="DNASU" id="1146131"/>
<dbReference type="EnsemblBacteria" id="AAS61349">
    <property type="protein sequence ID" value="AAS61349"/>
    <property type="gene ID" value="YP_1103"/>
</dbReference>
<dbReference type="GeneID" id="57976085"/>
<dbReference type="KEGG" id="ype:YPO2610"/>
<dbReference type="KEGG" id="ypk:y1184"/>
<dbReference type="KEGG" id="ypm:YP_1103"/>
<dbReference type="PATRIC" id="fig|214092.21.peg.3040"/>
<dbReference type="eggNOG" id="COG0495">
    <property type="taxonomic scope" value="Bacteria"/>
</dbReference>
<dbReference type="HOGENOM" id="CLU_004427_0_0_6"/>
<dbReference type="OMA" id="GIEHACM"/>
<dbReference type="OrthoDB" id="9810365at2"/>
<dbReference type="Proteomes" id="UP000000815">
    <property type="component" value="Chromosome"/>
</dbReference>
<dbReference type="Proteomes" id="UP000001019">
    <property type="component" value="Chromosome"/>
</dbReference>
<dbReference type="Proteomes" id="UP000002490">
    <property type="component" value="Chromosome"/>
</dbReference>
<dbReference type="GO" id="GO:0005829">
    <property type="term" value="C:cytosol"/>
    <property type="evidence" value="ECO:0000318"/>
    <property type="project" value="GO_Central"/>
</dbReference>
<dbReference type="GO" id="GO:0002161">
    <property type="term" value="F:aminoacyl-tRNA deacylase activity"/>
    <property type="evidence" value="ECO:0007669"/>
    <property type="project" value="InterPro"/>
</dbReference>
<dbReference type="GO" id="GO:0005524">
    <property type="term" value="F:ATP binding"/>
    <property type="evidence" value="ECO:0007669"/>
    <property type="project" value="UniProtKB-UniRule"/>
</dbReference>
<dbReference type="GO" id="GO:0004823">
    <property type="term" value="F:leucine-tRNA ligase activity"/>
    <property type="evidence" value="ECO:0000318"/>
    <property type="project" value="GO_Central"/>
</dbReference>
<dbReference type="GO" id="GO:0006429">
    <property type="term" value="P:leucyl-tRNA aminoacylation"/>
    <property type="evidence" value="ECO:0000318"/>
    <property type="project" value="GO_Central"/>
</dbReference>
<dbReference type="CDD" id="cd07958">
    <property type="entry name" value="Anticodon_Ia_Leu_BEm"/>
    <property type="match status" value="1"/>
</dbReference>
<dbReference type="CDD" id="cd00812">
    <property type="entry name" value="LeuRS_core"/>
    <property type="match status" value="1"/>
</dbReference>
<dbReference type="FunFam" id="1.10.730.10:FF:000002">
    <property type="entry name" value="Leucine--tRNA ligase"/>
    <property type="match status" value="2"/>
</dbReference>
<dbReference type="FunFam" id="2.20.28.290:FF:000001">
    <property type="entry name" value="Leucine--tRNA ligase"/>
    <property type="match status" value="1"/>
</dbReference>
<dbReference type="FunFam" id="3.10.20.590:FF:000001">
    <property type="entry name" value="Leucine--tRNA ligase"/>
    <property type="match status" value="1"/>
</dbReference>
<dbReference type="FunFam" id="3.40.50.620:FF:000003">
    <property type="entry name" value="Leucine--tRNA ligase"/>
    <property type="match status" value="1"/>
</dbReference>
<dbReference type="FunFam" id="3.40.50.620:FF:000124">
    <property type="entry name" value="Leucine--tRNA ligase"/>
    <property type="match status" value="1"/>
</dbReference>
<dbReference type="FunFam" id="3.90.740.10:FF:000012">
    <property type="entry name" value="Leucine--tRNA ligase"/>
    <property type="match status" value="1"/>
</dbReference>
<dbReference type="Gene3D" id="2.20.28.290">
    <property type="match status" value="1"/>
</dbReference>
<dbReference type="Gene3D" id="3.10.20.590">
    <property type="match status" value="1"/>
</dbReference>
<dbReference type="Gene3D" id="3.40.50.620">
    <property type="entry name" value="HUPs"/>
    <property type="match status" value="2"/>
</dbReference>
<dbReference type="Gene3D" id="1.10.730.10">
    <property type="entry name" value="Isoleucyl-tRNA Synthetase, Domain 1"/>
    <property type="match status" value="1"/>
</dbReference>
<dbReference type="Gene3D" id="3.90.740.10">
    <property type="entry name" value="Valyl/Leucyl/Isoleucyl-tRNA synthetase, editing domain"/>
    <property type="match status" value="1"/>
</dbReference>
<dbReference type="HAMAP" id="MF_00049_B">
    <property type="entry name" value="Leu_tRNA_synth_B"/>
    <property type="match status" value="1"/>
</dbReference>
<dbReference type="InterPro" id="IPR001412">
    <property type="entry name" value="aa-tRNA-synth_I_CS"/>
</dbReference>
<dbReference type="InterPro" id="IPR002300">
    <property type="entry name" value="aa-tRNA-synth_Ia"/>
</dbReference>
<dbReference type="InterPro" id="IPR002302">
    <property type="entry name" value="Leu-tRNA-ligase"/>
</dbReference>
<dbReference type="InterPro" id="IPR025709">
    <property type="entry name" value="Leu_tRNA-synth_edit"/>
</dbReference>
<dbReference type="InterPro" id="IPR013155">
    <property type="entry name" value="M/V/L/I-tRNA-synth_anticd-bd"/>
</dbReference>
<dbReference type="InterPro" id="IPR015413">
    <property type="entry name" value="Methionyl/Leucyl_tRNA_Synth"/>
</dbReference>
<dbReference type="InterPro" id="IPR014729">
    <property type="entry name" value="Rossmann-like_a/b/a_fold"/>
</dbReference>
<dbReference type="InterPro" id="IPR009080">
    <property type="entry name" value="tRNAsynth_Ia_anticodon-bd"/>
</dbReference>
<dbReference type="InterPro" id="IPR009008">
    <property type="entry name" value="Val/Leu/Ile-tRNA-synth_edit"/>
</dbReference>
<dbReference type="NCBIfam" id="TIGR00396">
    <property type="entry name" value="leuS_bact"/>
    <property type="match status" value="1"/>
</dbReference>
<dbReference type="PANTHER" id="PTHR43740:SF2">
    <property type="entry name" value="LEUCINE--TRNA LIGASE, MITOCHONDRIAL"/>
    <property type="match status" value="1"/>
</dbReference>
<dbReference type="PANTHER" id="PTHR43740">
    <property type="entry name" value="LEUCYL-TRNA SYNTHETASE"/>
    <property type="match status" value="1"/>
</dbReference>
<dbReference type="Pfam" id="PF08264">
    <property type="entry name" value="Anticodon_1"/>
    <property type="match status" value="1"/>
</dbReference>
<dbReference type="Pfam" id="PF00133">
    <property type="entry name" value="tRNA-synt_1"/>
    <property type="match status" value="2"/>
</dbReference>
<dbReference type="Pfam" id="PF13603">
    <property type="entry name" value="tRNA-synt_1_2"/>
    <property type="match status" value="1"/>
</dbReference>
<dbReference type="Pfam" id="PF09334">
    <property type="entry name" value="tRNA-synt_1g"/>
    <property type="match status" value="1"/>
</dbReference>
<dbReference type="PRINTS" id="PR00985">
    <property type="entry name" value="TRNASYNTHLEU"/>
</dbReference>
<dbReference type="SUPFAM" id="SSF47323">
    <property type="entry name" value="Anticodon-binding domain of a subclass of class I aminoacyl-tRNA synthetases"/>
    <property type="match status" value="1"/>
</dbReference>
<dbReference type="SUPFAM" id="SSF52374">
    <property type="entry name" value="Nucleotidylyl transferase"/>
    <property type="match status" value="1"/>
</dbReference>
<dbReference type="SUPFAM" id="SSF50677">
    <property type="entry name" value="ValRS/IleRS/LeuRS editing domain"/>
    <property type="match status" value="1"/>
</dbReference>
<dbReference type="PROSITE" id="PS00178">
    <property type="entry name" value="AA_TRNA_LIGASE_I"/>
    <property type="match status" value="1"/>
</dbReference>
<gene>
    <name evidence="1" type="primary">leuS</name>
    <name type="ordered locus">YPO2610</name>
    <name type="ordered locus">y1184</name>
    <name type="ordered locus">YP_1103</name>
</gene>
<accession>Q8ZDF8</accession>
<accession>Q0WDS2</accession>
<organism>
    <name type="scientific">Yersinia pestis</name>
    <dbReference type="NCBI Taxonomy" id="632"/>
    <lineage>
        <taxon>Bacteria</taxon>
        <taxon>Pseudomonadati</taxon>
        <taxon>Pseudomonadota</taxon>
        <taxon>Gammaproteobacteria</taxon>
        <taxon>Enterobacterales</taxon>
        <taxon>Yersiniaceae</taxon>
        <taxon>Yersinia</taxon>
    </lineage>
</organism>
<protein>
    <recommendedName>
        <fullName evidence="1">Leucine--tRNA ligase</fullName>
        <ecNumber evidence="1">6.1.1.4</ecNumber>
    </recommendedName>
    <alternativeName>
        <fullName evidence="1">Leucyl-tRNA synthetase</fullName>
        <shortName evidence="1">LeuRS</shortName>
    </alternativeName>
</protein>
<reference key="1">
    <citation type="journal article" date="2001" name="Nature">
        <title>Genome sequence of Yersinia pestis, the causative agent of plague.</title>
        <authorList>
            <person name="Parkhill J."/>
            <person name="Wren B.W."/>
            <person name="Thomson N.R."/>
            <person name="Titball R.W."/>
            <person name="Holden M.T.G."/>
            <person name="Prentice M.B."/>
            <person name="Sebaihia M."/>
            <person name="James K.D."/>
            <person name="Churcher C.M."/>
            <person name="Mungall K.L."/>
            <person name="Baker S."/>
            <person name="Basham D."/>
            <person name="Bentley S.D."/>
            <person name="Brooks K."/>
            <person name="Cerdeno-Tarraga A.-M."/>
            <person name="Chillingworth T."/>
            <person name="Cronin A."/>
            <person name="Davies R.M."/>
            <person name="Davis P."/>
            <person name="Dougan G."/>
            <person name="Feltwell T."/>
            <person name="Hamlin N."/>
            <person name="Holroyd S."/>
            <person name="Jagels K."/>
            <person name="Karlyshev A.V."/>
            <person name="Leather S."/>
            <person name="Moule S."/>
            <person name="Oyston P.C.F."/>
            <person name="Quail M.A."/>
            <person name="Rutherford K.M."/>
            <person name="Simmonds M."/>
            <person name="Skelton J."/>
            <person name="Stevens K."/>
            <person name="Whitehead S."/>
            <person name="Barrell B.G."/>
        </authorList>
    </citation>
    <scope>NUCLEOTIDE SEQUENCE [LARGE SCALE GENOMIC DNA]</scope>
    <source>
        <strain>CO-92 / Biovar Orientalis</strain>
    </source>
</reference>
<reference key="2">
    <citation type="journal article" date="2002" name="J. Bacteriol.">
        <title>Genome sequence of Yersinia pestis KIM.</title>
        <authorList>
            <person name="Deng W."/>
            <person name="Burland V."/>
            <person name="Plunkett G. III"/>
            <person name="Boutin A."/>
            <person name="Mayhew G.F."/>
            <person name="Liss P."/>
            <person name="Perna N.T."/>
            <person name="Rose D.J."/>
            <person name="Mau B."/>
            <person name="Zhou S."/>
            <person name="Schwartz D.C."/>
            <person name="Fetherston J.D."/>
            <person name="Lindler L.E."/>
            <person name="Brubaker R.R."/>
            <person name="Plano G.V."/>
            <person name="Straley S.C."/>
            <person name="McDonough K.A."/>
            <person name="Nilles M.L."/>
            <person name="Matson J.S."/>
            <person name="Blattner F.R."/>
            <person name="Perry R.D."/>
        </authorList>
    </citation>
    <scope>NUCLEOTIDE SEQUENCE [LARGE SCALE GENOMIC DNA]</scope>
    <source>
        <strain>KIM10+ / Biovar Mediaevalis</strain>
    </source>
</reference>
<reference key="3">
    <citation type="journal article" date="2004" name="DNA Res.">
        <title>Complete genome sequence of Yersinia pestis strain 91001, an isolate avirulent to humans.</title>
        <authorList>
            <person name="Song Y."/>
            <person name="Tong Z."/>
            <person name="Wang J."/>
            <person name="Wang L."/>
            <person name="Guo Z."/>
            <person name="Han Y."/>
            <person name="Zhang J."/>
            <person name="Pei D."/>
            <person name="Zhou D."/>
            <person name="Qin H."/>
            <person name="Pang X."/>
            <person name="Han Y."/>
            <person name="Zhai J."/>
            <person name="Li M."/>
            <person name="Cui B."/>
            <person name="Qi Z."/>
            <person name="Jin L."/>
            <person name="Dai R."/>
            <person name="Chen F."/>
            <person name="Li S."/>
            <person name="Ye C."/>
            <person name="Du Z."/>
            <person name="Lin W."/>
            <person name="Wang J."/>
            <person name="Yu J."/>
            <person name="Yang H."/>
            <person name="Wang J."/>
            <person name="Huang P."/>
            <person name="Yang R."/>
        </authorList>
    </citation>
    <scope>NUCLEOTIDE SEQUENCE [LARGE SCALE GENOMIC DNA]</scope>
    <source>
        <strain>91001 / Biovar Mediaevalis</strain>
    </source>
</reference>
<feature type="chain" id="PRO_0000152124" description="Leucine--tRNA ligase">
    <location>
        <begin position="1"/>
        <end position="860"/>
    </location>
</feature>
<feature type="short sequence motif" description="'HIGH' region">
    <location>
        <begin position="42"/>
        <end position="52"/>
    </location>
</feature>
<feature type="short sequence motif" description="'KMSKS' region">
    <location>
        <begin position="619"/>
        <end position="623"/>
    </location>
</feature>
<feature type="binding site" evidence="1">
    <location>
        <position position="622"/>
    </location>
    <ligand>
        <name>ATP</name>
        <dbReference type="ChEBI" id="CHEBI:30616"/>
    </ligand>
</feature>
<sequence>MQEQYRPEDIETQVQLHWQEKQTFKVTEDASKEKYYCLSMLPYPSGRLHMGHVRNYTIGDVISRYQRMLGKNVLQPIGWDAFGLPAEGAAVKNNTAPAPWTYDNIEYMKNQLKLLGFGYDWDREIATCKPDYYRWEQWFFTKLYEKGMVYKKTSAVNWCPHDLTVLANEQVIDGCCWRCDTKVERKEIPQWFIKITDYAEQLLNDLDTLESWPEQVKTMQRNWIGRSEGVDIVFDVVDSEEKLSVYTTRPDTFMGVTYVAVAAGHPLSLQAAATNPALADFVAECRNTKVAEAEMATMEKKGMATGLYAIHPLTGEKLPIWAANFVLMDYGTGAVMAVPGHDARDWEFATKYNLPIKPVILAADGSEPDLSQEAMTEKGTLFNSGEFDGLNHEDGFNAIADKLVALGVGQRKVNYRLRDWGVSRQRYWGAPIPMVTLEDGTVVPTPEDQLPVILPEDVVMDGISSPIKADPEWAKTTVNGIPGLRETDTFDTFMESSWYYARYTCPQYDDGMLDPAAANYWLPVDQYVGGIEHAIMHLMYFRFFHKLLRDAGLVDSDEPAKRLLCQGMVLADAFYYTGNNGERIWVSPVDAIVERDDKGRIVKAVDAEGHELVYAGMSKMSKSKNNGIDPQVMVEKYGADTVRLFMMFASPAEMTLEWQESGVEGANRFLKRVWRLAFDHTAKGAVKPLDIASLTEEQKSLRRDLHKTIAKVTDDVGRRQTFNTAIAAVMELMNKLGRAPQETEQDRALMQEALLAVVRMLYPFTPHVCFSLWQALGGEGDIDTAPWPIADEQAMVEDSKLVVVQVNGKVRGRITVPADATEQQVRERAGQEHLVAKYLDGVTVRKVIYVPGKLLNLVVG</sequence>
<comment type="catalytic activity">
    <reaction evidence="1">
        <text>tRNA(Leu) + L-leucine + ATP = L-leucyl-tRNA(Leu) + AMP + diphosphate</text>
        <dbReference type="Rhea" id="RHEA:11688"/>
        <dbReference type="Rhea" id="RHEA-COMP:9613"/>
        <dbReference type="Rhea" id="RHEA-COMP:9622"/>
        <dbReference type="ChEBI" id="CHEBI:30616"/>
        <dbReference type="ChEBI" id="CHEBI:33019"/>
        <dbReference type="ChEBI" id="CHEBI:57427"/>
        <dbReference type="ChEBI" id="CHEBI:78442"/>
        <dbReference type="ChEBI" id="CHEBI:78494"/>
        <dbReference type="ChEBI" id="CHEBI:456215"/>
        <dbReference type="EC" id="6.1.1.4"/>
    </reaction>
</comment>
<comment type="subcellular location">
    <subcellularLocation>
        <location evidence="1">Cytoplasm</location>
    </subcellularLocation>
</comment>
<comment type="similarity">
    <text evidence="1">Belongs to the class-I aminoacyl-tRNA synthetase family.</text>
</comment>
<keyword id="KW-0030">Aminoacyl-tRNA synthetase</keyword>
<keyword id="KW-0067">ATP-binding</keyword>
<keyword id="KW-0963">Cytoplasm</keyword>
<keyword id="KW-0436">Ligase</keyword>
<keyword id="KW-0547">Nucleotide-binding</keyword>
<keyword id="KW-0648">Protein biosynthesis</keyword>
<keyword id="KW-1185">Reference proteome</keyword>
<name>SYL_YERPE</name>
<evidence type="ECO:0000255" key="1">
    <source>
        <dbReference type="HAMAP-Rule" id="MF_00049"/>
    </source>
</evidence>
<proteinExistence type="inferred from homology"/>